<accession>Q0TC49</accession>
<proteinExistence type="inferred from homology"/>
<sequence length="901" mass="102979">MLIPSKLSRPVRLDHTVVRERLLAKLSGANNFRLALITSPAGYGKTTLISQWAAGKNDIGWYSLDEGDNQQERFASYLIAAVQQATNGHCAICETMAQKRQYASLTSLFAQLFIELAEWHSPLYLVIDDYHLITNPVIHESMRFFIRHQPENLTLVVLSRNLPQLGIANLRVRDQLLEIGSQQLAFTHQEAKQFFDCRLSSPIEAAESSRICDDVSGWATALQLIALSARQNTHSAHKSARRLAGINASHLSDYLVDEVLDNVDLATRHFLLKSAILRSMNDALITRVTGEENGQMRLEEIERQGLFLQRMDDTGEWFCYHPLFGNFLRQRCQWELAAELPEIHRAAAESWMAQGFPSEAIHHALAAGDALMLRDILLNHAWSLFNHSELSLLEESLKALPWDSLLENPQLVLLQAWLMQSQHRYGEVNTLLARAEHEIKDIREGTMHAEFNALRAQVAINDGSPDEAERLAKLALEELPPGWFYSRIVATSVLGEVLHCKGELTRSLALMQQTEQMARQHDVWHYALWSLIQQSEILFAQGFLQTAWETQEKAFQLINEQHLEQLPMHEFLVRIRAQLLWAWARLDEAEASARSGIEVLSSYQPQQQLQCLAMLIQCSLARGDLDNARSQLNRLENLLGNGKYHSDWISNANKVRVIYWQMTGDKAAAANWLRHTAKPEFANNHFLQGQWRNIARAQILLGEFESAEIVLEELNENARSLRLMSDLNRNLLLLNQLYWQAGRKSDAQRVLLDALKLANRTGFISHFVIEGEAMAQQLRQLIQLNTLPELEQHRAQRILREINQHHRHKFAHFDENFVERLLNHPEVPELIRTSPLTQREWQVLGLIYSGYSNEQIAGELEVAATTIKTHIRNLYQKLGVAHRQAAVQHAQKLLKMMGYGV</sequence>
<organism>
    <name type="scientific">Escherichia coli O6:K15:H31 (strain 536 / UPEC)</name>
    <dbReference type="NCBI Taxonomy" id="362663"/>
    <lineage>
        <taxon>Bacteria</taxon>
        <taxon>Pseudomonadati</taxon>
        <taxon>Pseudomonadota</taxon>
        <taxon>Gammaproteobacteria</taxon>
        <taxon>Enterobacterales</taxon>
        <taxon>Enterobacteriaceae</taxon>
        <taxon>Escherichia</taxon>
    </lineage>
</organism>
<name>MALT_ECOL5</name>
<dbReference type="EMBL" id="CP000247">
    <property type="protein sequence ID" value="ABG71480.1"/>
    <property type="molecule type" value="Genomic_DNA"/>
</dbReference>
<dbReference type="RefSeq" id="WP_000906981.1">
    <property type="nucleotide sequence ID" value="NC_008253.1"/>
</dbReference>
<dbReference type="SMR" id="Q0TC49"/>
<dbReference type="KEGG" id="ecp:ECP_3504"/>
<dbReference type="HOGENOM" id="CLU_006325_3_0_6"/>
<dbReference type="Proteomes" id="UP000009182">
    <property type="component" value="Chromosome"/>
</dbReference>
<dbReference type="GO" id="GO:0005524">
    <property type="term" value="F:ATP binding"/>
    <property type="evidence" value="ECO:0007669"/>
    <property type="project" value="UniProtKB-UniRule"/>
</dbReference>
<dbReference type="GO" id="GO:0003677">
    <property type="term" value="F:DNA binding"/>
    <property type="evidence" value="ECO:0007669"/>
    <property type="project" value="UniProtKB-KW"/>
</dbReference>
<dbReference type="GO" id="GO:0003700">
    <property type="term" value="F:DNA-binding transcription factor activity"/>
    <property type="evidence" value="ECO:0007669"/>
    <property type="project" value="UniProtKB-UniRule"/>
</dbReference>
<dbReference type="GO" id="GO:0045913">
    <property type="term" value="P:positive regulation of carbohydrate metabolic process"/>
    <property type="evidence" value="ECO:0007669"/>
    <property type="project" value="UniProtKB-UniRule"/>
</dbReference>
<dbReference type="GO" id="GO:0045893">
    <property type="term" value="P:positive regulation of DNA-templated transcription"/>
    <property type="evidence" value="ECO:0007669"/>
    <property type="project" value="UniProtKB-UniRule"/>
</dbReference>
<dbReference type="CDD" id="cd06170">
    <property type="entry name" value="LuxR_C_like"/>
    <property type="match status" value="1"/>
</dbReference>
<dbReference type="FunFam" id="1.10.10.10:FF:000115">
    <property type="entry name" value="HTH-type transcriptional regulator MalT"/>
    <property type="match status" value="1"/>
</dbReference>
<dbReference type="FunFam" id="1.25.40.10:FF:000086">
    <property type="entry name" value="HTH-type transcriptional regulator MalT"/>
    <property type="match status" value="1"/>
</dbReference>
<dbReference type="Gene3D" id="3.40.50.300">
    <property type="entry name" value="P-loop containing nucleotide triphosphate hydrolases"/>
    <property type="match status" value="1"/>
</dbReference>
<dbReference type="Gene3D" id="1.25.40.10">
    <property type="entry name" value="Tetratricopeptide repeat domain"/>
    <property type="match status" value="1"/>
</dbReference>
<dbReference type="Gene3D" id="1.10.10.10">
    <property type="entry name" value="Winged helix-like DNA-binding domain superfamily/Winged helix DNA-binding domain"/>
    <property type="match status" value="1"/>
</dbReference>
<dbReference type="HAMAP" id="MF_01247">
    <property type="entry name" value="HTH_type_MalT"/>
    <property type="match status" value="1"/>
</dbReference>
<dbReference type="InterPro" id="IPR027417">
    <property type="entry name" value="P-loop_NTPase"/>
</dbReference>
<dbReference type="InterPro" id="IPR016032">
    <property type="entry name" value="Sig_transdc_resp-reg_C-effctor"/>
</dbReference>
<dbReference type="InterPro" id="IPR011990">
    <property type="entry name" value="TPR-like_helical_dom_sf"/>
</dbReference>
<dbReference type="InterPro" id="IPR041617">
    <property type="entry name" value="TPR_MalT"/>
</dbReference>
<dbReference type="InterPro" id="IPR023768">
    <property type="entry name" value="Tscrpt_reg_HTH_MalT"/>
</dbReference>
<dbReference type="InterPro" id="IPR000792">
    <property type="entry name" value="Tscrpt_reg_LuxR_C"/>
</dbReference>
<dbReference type="InterPro" id="IPR036388">
    <property type="entry name" value="WH-like_DNA-bd_sf"/>
</dbReference>
<dbReference type="NCBIfam" id="NF003420">
    <property type="entry name" value="PRK04841.1"/>
    <property type="match status" value="1"/>
</dbReference>
<dbReference type="PANTHER" id="PTHR44688">
    <property type="entry name" value="DNA-BINDING TRANSCRIPTIONAL ACTIVATOR DEVR_DOSR"/>
    <property type="match status" value="1"/>
</dbReference>
<dbReference type="PANTHER" id="PTHR44688:SF16">
    <property type="entry name" value="DNA-BINDING TRANSCRIPTIONAL ACTIVATOR DEVR_DOSR"/>
    <property type="match status" value="1"/>
</dbReference>
<dbReference type="Pfam" id="PF00196">
    <property type="entry name" value="GerE"/>
    <property type="match status" value="1"/>
</dbReference>
<dbReference type="Pfam" id="PF17874">
    <property type="entry name" value="TPR_MalT"/>
    <property type="match status" value="1"/>
</dbReference>
<dbReference type="PRINTS" id="PR00038">
    <property type="entry name" value="HTHLUXR"/>
</dbReference>
<dbReference type="SMART" id="SM00421">
    <property type="entry name" value="HTH_LUXR"/>
    <property type="match status" value="1"/>
</dbReference>
<dbReference type="SUPFAM" id="SSF46894">
    <property type="entry name" value="C-terminal effector domain of the bipartite response regulators"/>
    <property type="match status" value="1"/>
</dbReference>
<dbReference type="SUPFAM" id="SSF52540">
    <property type="entry name" value="P-loop containing nucleoside triphosphate hydrolases"/>
    <property type="match status" value="1"/>
</dbReference>
<dbReference type="SUPFAM" id="SSF48452">
    <property type="entry name" value="TPR-like"/>
    <property type="match status" value="1"/>
</dbReference>
<dbReference type="PROSITE" id="PS00622">
    <property type="entry name" value="HTH_LUXR_1"/>
    <property type="match status" value="1"/>
</dbReference>
<dbReference type="PROSITE" id="PS50043">
    <property type="entry name" value="HTH_LUXR_2"/>
    <property type="match status" value="1"/>
</dbReference>
<reference key="1">
    <citation type="journal article" date="2006" name="Mol. Microbiol.">
        <title>Role of pathogenicity island-associated integrases in the genome plasticity of uropathogenic Escherichia coli strain 536.</title>
        <authorList>
            <person name="Hochhut B."/>
            <person name="Wilde C."/>
            <person name="Balling G."/>
            <person name="Middendorf B."/>
            <person name="Dobrindt U."/>
            <person name="Brzuszkiewicz E."/>
            <person name="Gottschalk G."/>
            <person name="Carniel E."/>
            <person name="Hacker J."/>
        </authorList>
    </citation>
    <scope>NUCLEOTIDE SEQUENCE [LARGE SCALE GENOMIC DNA]</scope>
    <source>
        <strain>536 / UPEC</strain>
    </source>
</reference>
<comment type="function">
    <text evidence="1">Positively regulates the transcription of the maltose regulon whose gene products are responsible for uptake and catabolism of malto-oligosaccharides. Specifically binds to the promoter region of its target genes, recognizing a short DNA motif called the MalT box.</text>
</comment>
<comment type="activity regulation">
    <text evidence="1">Activated by ATP and maltotriose, which are both required for DNA binding.</text>
</comment>
<comment type="subunit">
    <text evidence="1">Monomer in solution. Oligomerizes to an active state in the presence of the positive effectors ATP and maltotriose.</text>
</comment>
<comment type="similarity">
    <text evidence="1">Belongs to the MalT family.</text>
</comment>
<feature type="chain" id="PRO_1000085768" description="HTH-type transcriptional regulator MalT">
    <location>
        <begin position="1"/>
        <end position="901"/>
    </location>
</feature>
<feature type="domain" description="HTH luxR-type" evidence="1">
    <location>
        <begin position="829"/>
        <end position="894"/>
    </location>
</feature>
<feature type="DNA-binding region" description="H-T-H motif" evidence="1">
    <location>
        <begin position="853"/>
        <end position="872"/>
    </location>
</feature>
<feature type="binding site" evidence="1">
    <location>
        <begin position="39"/>
        <end position="46"/>
    </location>
    <ligand>
        <name>ATP</name>
        <dbReference type="ChEBI" id="CHEBI:30616"/>
    </ligand>
</feature>
<keyword id="KW-0010">Activator</keyword>
<keyword id="KW-0067">ATP-binding</keyword>
<keyword id="KW-0119">Carbohydrate metabolism</keyword>
<keyword id="KW-0238">DNA-binding</keyword>
<keyword id="KW-0547">Nucleotide-binding</keyword>
<keyword id="KW-0804">Transcription</keyword>
<keyword id="KW-0805">Transcription regulation</keyword>
<protein>
    <recommendedName>
        <fullName evidence="1">HTH-type transcriptional regulator MalT</fullName>
    </recommendedName>
    <alternativeName>
        <fullName evidence="1">ATP-dependent transcriptional activator MalT</fullName>
    </alternativeName>
</protein>
<evidence type="ECO:0000255" key="1">
    <source>
        <dbReference type="HAMAP-Rule" id="MF_01247"/>
    </source>
</evidence>
<gene>
    <name evidence="1" type="primary">malT</name>
    <name type="ordered locus">ECP_3504</name>
</gene>